<name>LDHA_PARCR</name>
<protein>
    <recommendedName>
        <fullName>L-lactate dehydrogenase A chain</fullName>
        <shortName>LDH-A</shortName>
        <ecNumber evidence="2">1.1.1.27</ecNumber>
    </recommendedName>
</protein>
<comment type="function">
    <text evidence="2">Interconverts simultaneously and stereospecifically pyruvate and lactate with concomitant interconversion of NADH and NAD(+).</text>
</comment>
<comment type="catalytic activity">
    <reaction evidence="2">
        <text>(S)-lactate + NAD(+) = pyruvate + NADH + H(+)</text>
        <dbReference type="Rhea" id="RHEA:23444"/>
        <dbReference type="ChEBI" id="CHEBI:15361"/>
        <dbReference type="ChEBI" id="CHEBI:15378"/>
        <dbReference type="ChEBI" id="CHEBI:16651"/>
        <dbReference type="ChEBI" id="CHEBI:57540"/>
        <dbReference type="ChEBI" id="CHEBI:57945"/>
        <dbReference type="EC" id="1.1.1.27"/>
    </reaction>
    <physiologicalReaction direction="left-to-right" evidence="2">
        <dbReference type="Rhea" id="RHEA:23445"/>
    </physiologicalReaction>
    <physiologicalReaction direction="right-to-left" evidence="2">
        <dbReference type="Rhea" id="RHEA:23446"/>
    </physiologicalReaction>
</comment>
<comment type="pathway">
    <text evidence="2">Fermentation; pyruvate fermentation to lactate; (S)-lactate from pyruvate: step 1/1.</text>
</comment>
<comment type="subunit">
    <text evidence="1">Homotetramer.</text>
</comment>
<comment type="subcellular location">
    <subcellularLocation>
        <location evidence="1">Cytoplasm</location>
    </subcellularLocation>
</comment>
<comment type="similarity">
    <text evidence="3">Belongs to the LDH/MDH superfamily. LDH family.</text>
</comment>
<organism>
    <name type="scientific">Parachaenichthys charcoti</name>
    <name type="common">Charcot's dragonfish</name>
    <name type="synonym">Chaenichthys charcoti</name>
    <dbReference type="NCBI Taxonomy" id="36187"/>
    <lineage>
        <taxon>Eukaryota</taxon>
        <taxon>Metazoa</taxon>
        <taxon>Chordata</taxon>
        <taxon>Craniata</taxon>
        <taxon>Vertebrata</taxon>
        <taxon>Euteleostomi</taxon>
        <taxon>Actinopterygii</taxon>
        <taxon>Neopterygii</taxon>
        <taxon>Teleostei</taxon>
        <taxon>Neoteleostei</taxon>
        <taxon>Acanthomorphata</taxon>
        <taxon>Eupercaria</taxon>
        <taxon>Perciformes</taxon>
        <taxon>Notothenioidei</taxon>
        <taxon>Bathydraconidae</taxon>
        <taxon>Parachaenichthys</taxon>
    </lineage>
</organism>
<gene>
    <name type="primary">ldha</name>
</gene>
<evidence type="ECO:0000250" key="1"/>
<evidence type="ECO:0000250" key="2">
    <source>
        <dbReference type="UniProtKB" id="P00338"/>
    </source>
</evidence>
<evidence type="ECO:0000305" key="3"/>
<accession>O93538</accession>
<proteinExistence type="evidence at transcript level"/>
<reference key="1">
    <citation type="journal article" date="1998" name="Proc. Natl. Acad. Sci. U.S.A.">
        <title>Hot spots in cold adaptation: localized increases in conformational flexibility in lactate dehydrogenase A4 orthologs of Antarctic notothenioid fishes.</title>
        <authorList>
            <person name="Fields P.A."/>
            <person name="Somero G.N."/>
        </authorList>
    </citation>
    <scope>NUCLEOTIDE SEQUENCE [MRNA]</scope>
    <source>
        <tissue>Muscle</tissue>
    </source>
</reference>
<sequence>MSTKEKLISHVMKEEPVGSRNKVTVVGVGMVGMASAISILLKDLCDELAMVDVMEDKLKGEVMDLQHGSLFLKTKIVGDKDYSVTANSKVVVVTAGARQQEGESRLNLVQRNVNIFKFIIPNIVKYSPNCILMVVSNPVDILTYVAWKLSGFPRHRVIGSGTNLDSARFRHLIGEKLHLHPSSCHAWIVGEHGDSSVPVWSGVNVAGVSLQDLNPQMGTEGDGENWKAIHKEVVDGAYEVIKLKGYTSWAIGMSVADLVESIIKNMHKVHPVSTLVQGMHGVKDEVFLSVPCVLGNSGLTDVIHMTLKADEEKQVQKSAETLWGVQKELTL</sequence>
<dbReference type="EC" id="1.1.1.27" evidence="2"/>
<dbReference type="EMBL" id="AF079821">
    <property type="protein sequence ID" value="AAC63279.1"/>
    <property type="molecule type" value="mRNA"/>
</dbReference>
<dbReference type="SMR" id="O93538"/>
<dbReference type="UniPathway" id="UPA00554">
    <property type="reaction ID" value="UER00611"/>
</dbReference>
<dbReference type="GO" id="GO:0005737">
    <property type="term" value="C:cytoplasm"/>
    <property type="evidence" value="ECO:0007669"/>
    <property type="project" value="UniProtKB-SubCell"/>
</dbReference>
<dbReference type="GO" id="GO:0004459">
    <property type="term" value="F:L-lactate dehydrogenase activity"/>
    <property type="evidence" value="ECO:0007669"/>
    <property type="project" value="UniProtKB-EC"/>
</dbReference>
<dbReference type="GO" id="GO:0006089">
    <property type="term" value="P:lactate metabolic process"/>
    <property type="evidence" value="ECO:0007669"/>
    <property type="project" value="TreeGrafter"/>
</dbReference>
<dbReference type="CDD" id="cd05293">
    <property type="entry name" value="LDH_1"/>
    <property type="match status" value="1"/>
</dbReference>
<dbReference type="FunFam" id="3.40.50.720:FF:000029">
    <property type="entry name" value="L-lactate dehydrogenase A chain"/>
    <property type="match status" value="1"/>
</dbReference>
<dbReference type="FunFam" id="3.90.110.10:FF:000003">
    <property type="entry name" value="L-lactate dehydrogenase A chain"/>
    <property type="match status" value="1"/>
</dbReference>
<dbReference type="Gene3D" id="3.90.110.10">
    <property type="entry name" value="Lactate dehydrogenase/glycoside hydrolase, family 4, C-terminal"/>
    <property type="match status" value="1"/>
</dbReference>
<dbReference type="Gene3D" id="3.40.50.720">
    <property type="entry name" value="NAD(P)-binding Rossmann-like Domain"/>
    <property type="match status" value="1"/>
</dbReference>
<dbReference type="HAMAP" id="MF_00488">
    <property type="entry name" value="Lactate_dehydrog"/>
    <property type="match status" value="1"/>
</dbReference>
<dbReference type="InterPro" id="IPR001557">
    <property type="entry name" value="L-lactate/malate_DH"/>
</dbReference>
<dbReference type="InterPro" id="IPR011304">
    <property type="entry name" value="L-lactate_DH"/>
</dbReference>
<dbReference type="InterPro" id="IPR018177">
    <property type="entry name" value="L-lactate_DH_AS"/>
</dbReference>
<dbReference type="InterPro" id="IPR022383">
    <property type="entry name" value="Lactate/malate_DH_C"/>
</dbReference>
<dbReference type="InterPro" id="IPR001236">
    <property type="entry name" value="Lactate/malate_DH_N"/>
</dbReference>
<dbReference type="InterPro" id="IPR015955">
    <property type="entry name" value="Lactate_DH/Glyco_Ohase_4_C"/>
</dbReference>
<dbReference type="InterPro" id="IPR036291">
    <property type="entry name" value="NAD(P)-bd_dom_sf"/>
</dbReference>
<dbReference type="NCBIfam" id="TIGR01771">
    <property type="entry name" value="L-LDH-NAD"/>
    <property type="match status" value="1"/>
</dbReference>
<dbReference type="NCBIfam" id="NF000824">
    <property type="entry name" value="PRK00066.1"/>
    <property type="match status" value="1"/>
</dbReference>
<dbReference type="NCBIfam" id="NF004863">
    <property type="entry name" value="PRK06223.1"/>
    <property type="match status" value="1"/>
</dbReference>
<dbReference type="PANTHER" id="PTHR43128">
    <property type="entry name" value="L-2-HYDROXYCARBOXYLATE DEHYDROGENASE (NAD(P)(+))"/>
    <property type="match status" value="1"/>
</dbReference>
<dbReference type="PANTHER" id="PTHR43128:SF10">
    <property type="entry name" value="L-LACTATE DEHYDROGENASE A CHAIN"/>
    <property type="match status" value="1"/>
</dbReference>
<dbReference type="Pfam" id="PF02866">
    <property type="entry name" value="Ldh_1_C"/>
    <property type="match status" value="1"/>
</dbReference>
<dbReference type="Pfam" id="PF00056">
    <property type="entry name" value="Ldh_1_N"/>
    <property type="match status" value="1"/>
</dbReference>
<dbReference type="PIRSF" id="PIRSF000102">
    <property type="entry name" value="Lac_mal_DH"/>
    <property type="match status" value="1"/>
</dbReference>
<dbReference type="PRINTS" id="PR00086">
    <property type="entry name" value="LLDHDRGNASE"/>
</dbReference>
<dbReference type="SUPFAM" id="SSF56327">
    <property type="entry name" value="LDH C-terminal domain-like"/>
    <property type="match status" value="1"/>
</dbReference>
<dbReference type="SUPFAM" id="SSF51735">
    <property type="entry name" value="NAD(P)-binding Rossmann-fold domains"/>
    <property type="match status" value="1"/>
</dbReference>
<dbReference type="PROSITE" id="PS00064">
    <property type="entry name" value="L_LDH"/>
    <property type="match status" value="1"/>
</dbReference>
<feature type="initiator methionine" description="Removed" evidence="1">
    <location>
        <position position="1"/>
    </location>
</feature>
<feature type="chain" id="PRO_0000168448" description="L-lactate dehydrogenase A chain">
    <location>
        <begin position="2"/>
        <end position="331"/>
    </location>
</feature>
<feature type="active site" description="Proton acceptor" evidence="1">
    <location>
        <position position="192"/>
    </location>
</feature>
<feature type="binding site" evidence="1">
    <location>
        <begin position="29"/>
        <end position="57"/>
    </location>
    <ligand>
        <name>NAD(+)</name>
        <dbReference type="ChEBI" id="CHEBI:57540"/>
    </ligand>
</feature>
<feature type="binding site" evidence="1">
    <location>
        <position position="98"/>
    </location>
    <ligand>
        <name>NAD(+)</name>
        <dbReference type="ChEBI" id="CHEBI:57540"/>
    </ligand>
</feature>
<feature type="binding site" evidence="1">
    <location>
        <position position="105"/>
    </location>
    <ligand>
        <name>substrate</name>
    </ligand>
</feature>
<feature type="binding site" evidence="1">
    <location>
        <position position="137"/>
    </location>
    <ligand>
        <name>NAD(+)</name>
        <dbReference type="ChEBI" id="CHEBI:57540"/>
    </ligand>
</feature>
<feature type="binding site" evidence="1">
    <location>
        <position position="137"/>
    </location>
    <ligand>
        <name>substrate</name>
    </ligand>
</feature>
<feature type="binding site" evidence="1">
    <location>
        <position position="168"/>
    </location>
    <ligand>
        <name>substrate</name>
    </ligand>
</feature>
<feature type="binding site" evidence="1">
    <location>
        <position position="247"/>
    </location>
    <ligand>
        <name>substrate</name>
    </ligand>
</feature>
<keyword id="KW-0963">Cytoplasm</keyword>
<keyword id="KW-0520">NAD</keyword>
<keyword id="KW-0560">Oxidoreductase</keyword>